<name>CHLB_SYNR3</name>
<dbReference type="EC" id="1.3.7.7" evidence="1"/>
<dbReference type="EMBL" id="CT978603">
    <property type="protein sequence ID" value="CAK28468.1"/>
    <property type="status" value="ALT_INIT"/>
    <property type="molecule type" value="Genomic_DNA"/>
</dbReference>
<dbReference type="SMR" id="A5GUA9"/>
<dbReference type="STRING" id="316278.SynRCC307_1565"/>
<dbReference type="KEGG" id="syr:SynRCC307_1565"/>
<dbReference type="eggNOG" id="COG2710">
    <property type="taxonomic scope" value="Bacteria"/>
</dbReference>
<dbReference type="HOGENOM" id="CLU_025470_0_0_3"/>
<dbReference type="OrthoDB" id="5717231at2"/>
<dbReference type="UniPathway" id="UPA00670"/>
<dbReference type="Proteomes" id="UP000001115">
    <property type="component" value="Chromosome"/>
</dbReference>
<dbReference type="GO" id="GO:0051539">
    <property type="term" value="F:4 iron, 4 sulfur cluster binding"/>
    <property type="evidence" value="ECO:0007669"/>
    <property type="project" value="UniProtKB-UniRule"/>
</dbReference>
<dbReference type="GO" id="GO:0005524">
    <property type="term" value="F:ATP binding"/>
    <property type="evidence" value="ECO:0007669"/>
    <property type="project" value="UniProtKB-UniRule"/>
</dbReference>
<dbReference type="GO" id="GO:0046872">
    <property type="term" value="F:metal ion binding"/>
    <property type="evidence" value="ECO:0007669"/>
    <property type="project" value="UniProtKB-KW"/>
</dbReference>
<dbReference type="GO" id="GO:0016730">
    <property type="term" value="F:oxidoreductase activity, acting on iron-sulfur proteins as donors"/>
    <property type="evidence" value="ECO:0007669"/>
    <property type="project" value="InterPro"/>
</dbReference>
<dbReference type="GO" id="GO:0016636">
    <property type="term" value="F:oxidoreductase activity, acting on the CH-CH group of donors, iron-sulfur protein as acceptor"/>
    <property type="evidence" value="ECO:0007669"/>
    <property type="project" value="UniProtKB-UniRule"/>
</dbReference>
<dbReference type="GO" id="GO:0036068">
    <property type="term" value="P:light-independent chlorophyll biosynthetic process"/>
    <property type="evidence" value="ECO:0007669"/>
    <property type="project" value="UniProtKB-UniRule"/>
</dbReference>
<dbReference type="GO" id="GO:0019685">
    <property type="term" value="P:photosynthesis, dark reaction"/>
    <property type="evidence" value="ECO:0007669"/>
    <property type="project" value="InterPro"/>
</dbReference>
<dbReference type="Gene3D" id="1.20.89.20">
    <property type="match status" value="1"/>
</dbReference>
<dbReference type="Gene3D" id="3.40.50.1980">
    <property type="entry name" value="Nitrogenase molybdenum iron protein domain"/>
    <property type="match status" value="3"/>
</dbReference>
<dbReference type="Gene3D" id="1.10.8.550">
    <property type="entry name" value="Proto-chlorophyllide reductase 57 kD subunit B"/>
    <property type="match status" value="1"/>
</dbReference>
<dbReference type="HAMAP" id="MF_00353">
    <property type="entry name" value="ChlB_BchB"/>
    <property type="match status" value="1"/>
</dbReference>
<dbReference type="InterPro" id="IPR050152">
    <property type="entry name" value="ChlB/BchB/BchZ"/>
</dbReference>
<dbReference type="InterPro" id="IPR013580">
    <property type="entry name" value="LI-POR_suB-like_C"/>
</dbReference>
<dbReference type="InterPro" id="IPR000510">
    <property type="entry name" value="Nase/OxRdtase_comp1"/>
</dbReference>
<dbReference type="InterPro" id="IPR042298">
    <property type="entry name" value="P-CP_red_C"/>
</dbReference>
<dbReference type="InterPro" id="IPR005969">
    <property type="entry name" value="Protochl_reductB"/>
</dbReference>
<dbReference type="InterPro" id="IPR016209">
    <property type="entry name" value="Protochlorophyllide_Rdtase"/>
</dbReference>
<dbReference type="NCBIfam" id="TIGR01278">
    <property type="entry name" value="DPOR_BchB"/>
    <property type="match status" value="1"/>
</dbReference>
<dbReference type="NCBIfam" id="NF002790">
    <property type="entry name" value="PRK02910.1-4"/>
    <property type="match status" value="1"/>
</dbReference>
<dbReference type="PANTHER" id="PTHR33712">
    <property type="entry name" value="LIGHT-INDEPENDENT PROTOCHLOROPHYLLIDE REDUCTASE SUBUNIT B"/>
    <property type="match status" value="1"/>
</dbReference>
<dbReference type="PANTHER" id="PTHR33712:SF7">
    <property type="entry name" value="LIGHT-INDEPENDENT PROTOCHLOROPHYLLIDE REDUCTASE SUBUNIT B"/>
    <property type="match status" value="1"/>
</dbReference>
<dbReference type="Pfam" id="PF00148">
    <property type="entry name" value="Oxidored_nitro"/>
    <property type="match status" value="1"/>
</dbReference>
<dbReference type="Pfam" id="PF08369">
    <property type="entry name" value="PCP_red"/>
    <property type="match status" value="1"/>
</dbReference>
<dbReference type="PIRSF" id="PIRSF000163">
    <property type="entry name" value="PCP_ChlB"/>
    <property type="match status" value="1"/>
</dbReference>
<dbReference type="SUPFAM" id="SSF53807">
    <property type="entry name" value="Helical backbone' metal receptor"/>
    <property type="match status" value="1"/>
</dbReference>
<accession>A5GUA9</accession>
<protein>
    <recommendedName>
        <fullName evidence="1">Light-independent protochlorophyllide reductase subunit B</fullName>
        <shortName evidence="1">DPOR subunit B</shortName>
        <shortName evidence="1">LI-POR subunit B</shortName>
        <ecNumber evidence="1">1.3.7.7</ecNumber>
    </recommendedName>
</protein>
<proteinExistence type="inferred from homology"/>
<gene>
    <name evidence="1" type="primary">chlB</name>
    <name type="ordered locus">SynRCC307_1565</name>
</gene>
<keyword id="KW-0004">4Fe-4S</keyword>
<keyword id="KW-0067">ATP-binding</keyword>
<keyword id="KW-0149">Chlorophyll biosynthesis</keyword>
<keyword id="KW-0408">Iron</keyword>
<keyword id="KW-0411">Iron-sulfur</keyword>
<keyword id="KW-0479">Metal-binding</keyword>
<keyword id="KW-0547">Nucleotide-binding</keyword>
<keyword id="KW-0560">Oxidoreductase</keyword>
<keyword id="KW-0602">Photosynthesis</keyword>
<keyword id="KW-1185">Reference proteome</keyword>
<organism>
    <name type="scientific">Synechococcus sp. (strain RCC307)</name>
    <dbReference type="NCBI Taxonomy" id="316278"/>
    <lineage>
        <taxon>Bacteria</taxon>
        <taxon>Bacillati</taxon>
        <taxon>Cyanobacteriota</taxon>
        <taxon>Cyanophyceae</taxon>
        <taxon>Synechococcales</taxon>
        <taxon>Synechococcaceae</taxon>
        <taxon>Synechococcus</taxon>
    </lineage>
</organism>
<evidence type="ECO:0000255" key="1">
    <source>
        <dbReference type="HAMAP-Rule" id="MF_00353"/>
    </source>
</evidence>
<evidence type="ECO:0000305" key="2"/>
<feature type="chain" id="PRO_0000324045" description="Light-independent protochlorophyllide reductase subunit B">
    <location>
        <begin position="1"/>
        <end position="527"/>
    </location>
</feature>
<feature type="active site" description="Proton donor" evidence="1">
    <location>
        <position position="290"/>
    </location>
</feature>
<feature type="binding site" evidence="1">
    <location>
        <position position="36"/>
    </location>
    <ligand>
        <name>[4Fe-4S] cluster</name>
        <dbReference type="ChEBI" id="CHEBI:49883"/>
        <note>ligand shared with heterodimeric partner</note>
    </ligand>
</feature>
<feature type="binding site" evidence="1">
    <location>
        <begin position="425"/>
        <end position="426"/>
    </location>
    <ligand>
        <name>substrate</name>
    </ligand>
</feature>
<reference key="1">
    <citation type="submission" date="2006-05" db="EMBL/GenBank/DDBJ databases">
        <authorList>
            <consortium name="Genoscope"/>
        </authorList>
    </citation>
    <scope>NUCLEOTIDE SEQUENCE [LARGE SCALE GENOMIC DNA]</scope>
    <source>
        <strain>RCC307</strain>
    </source>
</reference>
<comment type="function">
    <text evidence="1">Component of the dark-operative protochlorophyllide reductase (DPOR) that uses Mg-ATP and reduced ferredoxin to reduce ring D of protochlorophyllide (Pchlide) to form chlorophyllide a (Chlide). This reaction is light-independent. The NB-protein (ChlN-ChlB) is the catalytic component of the complex.</text>
</comment>
<comment type="catalytic activity">
    <reaction evidence="1">
        <text>chlorophyllide a + oxidized 2[4Fe-4S]-[ferredoxin] + 2 ADP + 2 phosphate = protochlorophyllide a + reduced 2[4Fe-4S]-[ferredoxin] + 2 ATP + 2 H2O</text>
        <dbReference type="Rhea" id="RHEA:28202"/>
        <dbReference type="Rhea" id="RHEA-COMP:10002"/>
        <dbReference type="Rhea" id="RHEA-COMP:10004"/>
        <dbReference type="ChEBI" id="CHEBI:15377"/>
        <dbReference type="ChEBI" id="CHEBI:30616"/>
        <dbReference type="ChEBI" id="CHEBI:33722"/>
        <dbReference type="ChEBI" id="CHEBI:33723"/>
        <dbReference type="ChEBI" id="CHEBI:43474"/>
        <dbReference type="ChEBI" id="CHEBI:83348"/>
        <dbReference type="ChEBI" id="CHEBI:83350"/>
        <dbReference type="ChEBI" id="CHEBI:456216"/>
        <dbReference type="EC" id="1.3.7.7"/>
    </reaction>
</comment>
<comment type="cofactor">
    <cofactor evidence="1">
        <name>[4Fe-4S] cluster</name>
        <dbReference type="ChEBI" id="CHEBI:49883"/>
    </cofactor>
    <text evidence="1">Binds 1 [4Fe-4S] cluster per heterodimer. The cluster is bound at the heterodimer interface by residues from both subunits.</text>
</comment>
<comment type="pathway">
    <text evidence="1">Porphyrin-containing compound metabolism; chlorophyll biosynthesis (light-independent).</text>
</comment>
<comment type="subunit">
    <text evidence="1">Protochlorophyllide reductase is composed of three subunits; ChlL, ChlN and ChlB. Forms a heterotetramer of two ChlB and two ChlN subunits.</text>
</comment>
<comment type="similarity">
    <text evidence="1">Belongs to the ChlB/BchB/BchZ family.</text>
</comment>
<comment type="sequence caution" evidence="2">
    <conflict type="erroneous initiation">
        <sequence resource="EMBL-CDS" id="CAK28468"/>
    </conflict>
</comment>
<sequence>MELTLWTYEGPPHVGAMRIAASMQGVHYVLHAPQGDTYADLLFTMIERRDQRPPVTYTTFQARDLGGDTAELVKRSIRDAADRFQPQALLVGESCTAELIQDQPGALAQGMNLPMPVVSLELPAYSKKENWGAAETFYQLIRTLLKPQLPPAGLSKPDPKRWQEQGRRPRVNLLGPSLLGFRCRDDVREVRVLLDELGIDTHVVAPLGASPEDLRRIPQAEANICLYPEVADSSCRWLERQFGMPTVSTVPIGIGATEMFCRELQELLGLEPTSQGSGQSRMPWYSRSVDSTYLTGKRVFIFADATHAIAAARIASRELGFEVVGLGSYSREQARAVRAAAEELGLAALISDNYLEVEAAMAEAAPELVLGTQMERHSAKRLGIPCAVISSPLHVQDVPARYAPQMGWEGANVIFDSWVHPLMMGLEEHLIGMFRHDFEFVDGHMSHKGEKPPGPEAADPITLAAEANGVDEAELLRWAPSGQAELSRIPFFVRGKVKRNTESYAQERGIINITDEVLYEAKAHFSR</sequence>